<name>YYCS_BACSU</name>
<proteinExistence type="predicted"/>
<gene>
    <name type="primary">yycS</name>
    <name type="ordered locus">BSU40240</name>
</gene>
<reference key="1">
    <citation type="journal article" date="1997" name="DNA Res.">
        <title>Sequence analysis of the 36-kb region between gntZ and trnY genes of Bacillus subtilis genome.</title>
        <authorList>
            <person name="Kasahara Y."/>
            <person name="Nakai S."/>
            <person name="Ogasawara N."/>
        </authorList>
    </citation>
    <scope>NUCLEOTIDE SEQUENCE [GENOMIC DNA]</scope>
    <source>
        <strain>168</strain>
    </source>
</reference>
<reference key="2">
    <citation type="journal article" date="1997" name="Nature">
        <title>The complete genome sequence of the Gram-positive bacterium Bacillus subtilis.</title>
        <authorList>
            <person name="Kunst F."/>
            <person name="Ogasawara N."/>
            <person name="Moszer I."/>
            <person name="Albertini A.M."/>
            <person name="Alloni G."/>
            <person name="Azevedo V."/>
            <person name="Bertero M.G."/>
            <person name="Bessieres P."/>
            <person name="Bolotin A."/>
            <person name="Borchert S."/>
            <person name="Borriss R."/>
            <person name="Boursier L."/>
            <person name="Brans A."/>
            <person name="Braun M."/>
            <person name="Brignell S.C."/>
            <person name="Bron S."/>
            <person name="Brouillet S."/>
            <person name="Bruschi C.V."/>
            <person name="Caldwell B."/>
            <person name="Capuano V."/>
            <person name="Carter N.M."/>
            <person name="Choi S.-K."/>
            <person name="Codani J.-J."/>
            <person name="Connerton I.F."/>
            <person name="Cummings N.J."/>
            <person name="Daniel R.A."/>
            <person name="Denizot F."/>
            <person name="Devine K.M."/>
            <person name="Duesterhoeft A."/>
            <person name="Ehrlich S.D."/>
            <person name="Emmerson P.T."/>
            <person name="Entian K.-D."/>
            <person name="Errington J."/>
            <person name="Fabret C."/>
            <person name="Ferrari E."/>
            <person name="Foulger D."/>
            <person name="Fritz C."/>
            <person name="Fujita M."/>
            <person name="Fujita Y."/>
            <person name="Fuma S."/>
            <person name="Galizzi A."/>
            <person name="Galleron N."/>
            <person name="Ghim S.-Y."/>
            <person name="Glaser P."/>
            <person name="Goffeau A."/>
            <person name="Golightly E.J."/>
            <person name="Grandi G."/>
            <person name="Guiseppi G."/>
            <person name="Guy B.J."/>
            <person name="Haga K."/>
            <person name="Haiech J."/>
            <person name="Harwood C.R."/>
            <person name="Henaut A."/>
            <person name="Hilbert H."/>
            <person name="Holsappel S."/>
            <person name="Hosono S."/>
            <person name="Hullo M.-F."/>
            <person name="Itaya M."/>
            <person name="Jones L.-M."/>
            <person name="Joris B."/>
            <person name="Karamata D."/>
            <person name="Kasahara Y."/>
            <person name="Klaerr-Blanchard M."/>
            <person name="Klein C."/>
            <person name="Kobayashi Y."/>
            <person name="Koetter P."/>
            <person name="Koningstein G."/>
            <person name="Krogh S."/>
            <person name="Kumano M."/>
            <person name="Kurita K."/>
            <person name="Lapidus A."/>
            <person name="Lardinois S."/>
            <person name="Lauber J."/>
            <person name="Lazarevic V."/>
            <person name="Lee S.-M."/>
            <person name="Levine A."/>
            <person name="Liu H."/>
            <person name="Masuda S."/>
            <person name="Mauel C."/>
            <person name="Medigue C."/>
            <person name="Medina N."/>
            <person name="Mellado R.P."/>
            <person name="Mizuno M."/>
            <person name="Moestl D."/>
            <person name="Nakai S."/>
            <person name="Noback M."/>
            <person name="Noone D."/>
            <person name="O'Reilly M."/>
            <person name="Ogawa K."/>
            <person name="Ogiwara A."/>
            <person name="Oudega B."/>
            <person name="Park S.-H."/>
            <person name="Parro V."/>
            <person name="Pohl T.M."/>
            <person name="Portetelle D."/>
            <person name="Porwollik S."/>
            <person name="Prescott A.M."/>
            <person name="Presecan E."/>
            <person name="Pujic P."/>
            <person name="Purnelle B."/>
            <person name="Rapoport G."/>
            <person name="Rey M."/>
            <person name="Reynolds S."/>
            <person name="Rieger M."/>
            <person name="Rivolta C."/>
            <person name="Rocha E."/>
            <person name="Roche B."/>
            <person name="Rose M."/>
            <person name="Sadaie Y."/>
            <person name="Sato T."/>
            <person name="Scanlan E."/>
            <person name="Schleich S."/>
            <person name="Schroeter R."/>
            <person name="Scoffone F."/>
            <person name="Sekiguchi J."/>
            <person name="Sekowska A."/>
            <person name="Seror S.J."/>
            <person name="Serror P."/>
            <person name="Shin B.-S."/>
            <person name="Soldo B."/>
            <person name="Sorokin A."/>
            <person name="Tacconi E."/>
            <person name="Takagi T."/>
            <person name="Takahashi H."/>
            <person name="Takemaru K."/>
            <person name="Takeuchi M."/>
            <person name="Tamakoshi A."/>
            <person name="Tanaka T."/>
            <person name="Terpstra P."/>
            <person name="Tognoni A."/>
            <person name="Tosato V."/>
            <person name="Uchiyama S."/>
            <person name="Vandenbol M."/>
            <person name="Vannier F."/>
            <person name="Vassarotti A."/>
            <person name="Viari A."/>
            <person name="Wambutt R."/>
            <person name="Wedler E."/>
            <person name="Wedler H."/>
            <person name="Weitzenegger T."/>
            <person name="Winters P."/>
            <person name="Wipat A."/>
            <person name="Yamamoto H."/>
            <person name="Yamane K."/>
            <person name="Yasumoto K."/>
            <person name="Yata K."/>
            <person name="Yoshida K."/>
            <person name="Yoshikawa H.-F."/>
            <person name="Zumstein E."/>
            <person name="Yoshikawa H."/>
            <person name="Danchin A."/>
        </authorList>
    </citation>
    <scope>NUCLEOTIDE SEQUENCE [LARGE SCALE GENOMIC DNA]</scope>
    <source>
        <strain>168</strain>
    </source>
</reference>
<sequence>MRFRWVWLFVIMLLLAECQPSYWVLEKDRIGEGSPDLEIYANYLQMHDDVKGYQVFTISEGKKMVVVSLGSSEKDKKLEVSDVKFSSKETIVTVERKPAPTANEKNPFILIGLDKIEGDLIVQDETGDRFEETDYQQ</sequence>
<feature type="chain" id="PRO_0000390398" description="Uncharacterized protein YycS">
    <location>
        <begin position="1"/>
        <end position="137"/>
    </location>
</feature>
<accession>Q45603</accession>
<accession>Q794W5</accession>
<organism>
    <name type="scientific">Bacillus subtilis (strain 168)</name>
    <dbReference type="NCBI Taxonomy" id="224308"/>
    <lineage>
        <taxon>Bacteria</taxon>
        <taxon>Bacillati</taxon>
        <taxon>Bacillota</taxon>
        <taxon>Bacilli</taxon>
        <taxon>Bacillales</taxon>
        <taxon>Bacillaceae</taxon>
        <taxon>Bacillus</taxon>
    </lineage>
</organism>
<protein>
    <recommendedName>
        <fullName>Uncharacterized protein YycS</fullName>
    </recommendedName>
</protein>
<dbReference type="EMBL" id="D78193">
    <property type="protein sequence ID" value="BAA11283.1"/>
    <property type="molecule type" value="Genomic_DNA"/>
</dbReference>
<dbReference type="EMBL" id="AL009126">
    <property type="protein sequence ID" value="CAB16061.1"/>
    <property type="molecule type" value="Genomic_DNA"/>
</dbReference>
<dbReference type="PIR" id="G70090">
    <property type="entry name" value="G70090"/>
</dbReference>
<dbReference type="RefSeq" id="NP_391904.1">
    <property type="nucleotide sequence ID" value="NC_000964.3"/>
</dbReference>
<dbReference type="RefSeq" id="WP_003243375.1">
    <property type="nucleotide sequence ID" value="NZ_OZ025638.1"/>
</dbReference>
<dbReference type="FunCoup" id="Q45603">
    <property type="interactions" value="37"/>
</dbReference>
<dbReference type="STRING" id="224308.BSU40240"/>
<dbReference type="PaxDb" id="224308-BSU40240"/>
<dbReference type="EnsemblBacteria" id="CAB16061">
    <property type="protein sequence ID" value="CAB16061"/>
    <property type="gene ID" value="BSU_40240"/>
</dbReference>
<dbReference type="GeneID" id="938490"/>
<dbReference type="KEGG" id="bsu:BSU40240"/>
<dbReference type="PATRIC" id="fig|224308.179.peg.4353"/>
<dbReference type="eggNOG" id="ENOG5032UEV">
    <property type="taxonomic scope" value="Bacteria"/>
</dbReference>
<dbReference type="InParanoid" id="Q45603"/>
<dbReference type="OrthoDB" id="2885948at2"/>
<dbReference type="BioCyc" id="BSUB:BSU40240-MONOMER"/>
<dbReference type="Proteomes" id="UP000001570">
    <property type="component" value="Chromosome"/>
</dbReference>
<keyword id="KW-1185">Reference proteome</keyword>